<evidence type="ECO:0000250" key="1">
    <source>
        <dbReference type="UniProtKB" id="Q4V7D2"/>
    </source>
</evidence>
<evidence type="ECO:0000250" key="2">
    <source>
        <dbReference type="UniProtKB" id="Q9GZN7"/>
    </source>
</evidence>
<evidence type="ECO:0000269" key="3">
    <source>
    </source>
</evidence>
<evidence type="ECO:0000303" key="4">
    <source>
    </source>
</evidence>
<evidence type="ECO:0000303" key="5">
    <source>
    </source>
</evidence>
<evidence type="ECO:0000305" key="6"/>
<gene>
    <name type="primary">Rogdi</name>
    <name type="synonym">Lzf</name>
</gene>
<reference key="1">
    <citation type="journal article" date="2002" name="Exp. Cell Res.">
        <title>Genetic approach and phenotype-based complementation screening for identification of stroma cell-derived proteins involved in cell proliferation.</title>
        <authorList>
            <person name="Tulin E.E."/>
            <person name="Onoda N."/>
            <person name="Hasegawa M."/>
            <person name="Nosaka T."/>
            <person name="Nomura H."/>
            <person name="Kitamura T."/>
        </authorList>
    </citation>
    <scope>NUCLEOTIDE SEQUENCE [MRNA] (ISOFORM 1)</scope>
    <scope>TISSUE SPECIFICITY</scope>
</reference>
<reference key="2">
    <citation type="journal article" date="2005" name="Science">
        <title>The transcriptional landscape of the mammalian genome.</title>
        <authorList>
            <person name="Carninci P."/>
            <person name="Kasukawa T."/>
            <person name="Katayama S."/>
            <person name="Gough J."/>
            <person name="Frith M.C."/>
            <person name="Maeda N."/>
            <person name="Oyama R."/>
            <person name="Ravasi T."/>
            <person name="Lenhard B."/>
            <person name="Wells C."/>
            <person name="Kodzius R."/>
            <person name="Shimokawa K."/>
            <person name="Bajic V.B."/>
            <person name="Brenner S.E."/>
            <person name="Batalov S."/>
            <person name="Forrest A.R."/>
            <person name="Zavolan M."/>
            <person name="Davis M.J."/>
            <person name="Wilming L.G."/>
            <person name="Aidinis V."/>
            <person name="Allen J.E."/>
            <person name="Ambesi-Impiombato A."/>
            <person name="Apweiler R."/>
            <person name="Aturaliya R.N."/>
            <person name="Bailey T.L."/>
            <person name="Bansal M."/>
            <person name="Baxter L."/>
            <person name="Beisel K.W."/>
            <person name="Bersano T."/>
            <person name="Bono H."/>
            <person name="Chalk A.M."/>
            <person name="Chiu K.P."/>
            <person name="Choudhary V."/>
            <person name="Christoffels A."/>
            <person name="Clutterbuck D.R."/>
            <person name="Crowe M.L."/>
            <person name="Dalla E."/>
            <person name="Dalrymple B.P."/>
            <person name="de Bono B."/>
            <person name="Della Gatta G."/>
            <person name="di Bernardo D."/>
            <person name="Down T."/>
            <person name="Engstrom P."/>
            <person name="Fagiolini M."/>
            <person name="Faulkner G."/>
            <person name="Fletcher C.F."/>
            <person name="Fukushima T."/>
            <person name="Furuno M."/>
            <person name="Futaki S."/>
            <person name="Gariboldi M."/>
            <person name="Georgii-Hemming P."/>
            <person name="Gingeras T.R."/>
            <person name="Gojobori T."/>
            <person name="Green R.E."/>
            <person name="Gustincich S."/>
            <person name="Harbers M."/>
            <person name="Hayashi Y."/>
            <person name="Hensch T.K."/>
            <person name="Hirokawa N."/>
            <person name="Hill D."/>
            <person name="Huminiecki L."/>
            <person name="Iacono M."/>
            <person name="Ikeo K."/>
            <person name="Iwama A."/>
            <person name="Ishikawa T."/>
            <person name="Jakt M."/>
            <person name="Kanapin A."/>
            <person name="Katoh M."/>
            <person name="Kawasawa Y."/>
            <person name="Kelso J."/>
            <person name="Kitamura H."/>
            <person name="Kitano H."/>
            <person name="Kollias G."/>
            <person name="Krishnan S.P."/>
            <person name="Kruger A."/>
            <person name="Kummerfeld S.K."/>
            <person name="Kurochkin I.V."/>
            <person name="Lareau L.F."/>
            <person name="Lazarevic D."/>
            <person name="Lipovich L."/>
            <person name="Liu J."/>
            <person name="Liuni S."/>
            <person name="McWilliam S."/>
            <person name="Madan Babu M."/>
            <person name="Madera M."/>
            <person name="Marchionni L."/>
            <person name="Matsuda H."/>
            <person name="Matsuzawa S."/>
            <person name="Miki H."/>
            <person name="Mignone F."/>
            <person name="Miyake S."/>
            <person name="Morris K."/>
            <person name="Mottagui-Tabar S."/>
            <person name="Mulder N."/>
            <person name="Nakano N."/>
            <person name="Nakauchi H."/>
            <person name="Ng P."/>
            <person name="Nilsson R."/>
            <person name="Nishiguchi S."/>
            <person name="Nishikawa S."/>
            <person name="Nori F."/>
            <person name="Ohara O."/>
            <person name="Okazaki Y."/>
            <person name="Orlando V."/>
            <person name="Pang K.C."/>
            <person name="Pavan W.J."/>
            <person name="Pavesi G."/>
            <person name="Pesole G."/>
            <person name="Petrovsky N."/>
            <person name="Piazza S."/>
            <person name="Reed J."/>
            <person name="Reid J.F."/>
            <person name="Ring B.Z."/>
            <person name="Ringwald M."/>
            <person name="Rost B."/>
            <person name="Ruan Y."/>
            <person name="Salzberg S.L."/>
            <person name="Sandelin A."/>
            <person name="Schneider C."/>
            <person name="Schoenbach C."/>
            <person name="Sekiguchi K."/>
            <person name="Semple C.A."/>
            <person name="Seno S."/>
            <person name="Sessa L."/>
            <person name="Sheng Y."/>
            <person name="Shibata Y."/>
            <person name="Shimada H."/>
            <person name="Shimada K."/>
            <person name="Silva D."/>
            <person name="Sinclair B."/>
            <person name="Sperling S."/>
            <person name="Stupka E."/>
            <person name="Sugiura K."/>
            <person name="Sultana R."/>
            <person name="Takenaka Y."/>
            <person name="Taki K."/>
            <person name="Tammoja K."/>
            <person name="Tan S.L."/>
            <person name="Tang S."/>
            <person name="Taylor M.S."/>
            <person name="Tegner J."/>
            <person name="Teichmann S.A."/>
            <person name="Ueda H.R."/>
            <person name="van Nimwegen E."/>
            <person name="Verardo R."/>
            <person name="Wei C.L."/>
            <person name="Yagi K."/>
            <person name="Yamanishi H."/>
            <person name="Zabarovsky E."/>
            <person name="Zhu S."/>
            <person name="Zimmer A."/>
            <person name="Hide W."/>
            <person name="Bult C."/>
            <person name="Grimmond S.M."/>
            <person name="Teasdale R.D."/>
            <person name="Liu E.T."/>
            <person name="Brusic V."/>
            <person name="Quackenbush J."/>
            <person name="Wahlestedt C."/>
            <person name="Mattick J.S."/>
            <person name="Hume D.A."/>
            <person name="Kai C."/>
            <person name="Sasaki D."/>
            <person name="Tomaru Y."/>
            <person name="Fukuda S."/>
            <person name="Kanamori-Katayama M."/>
            <person name="Suzuki M."/>
            <person name="Aoki J."/>
            <person name="Arakawa T."/>
            <person name="Iida J."/>
            <person name="Imamura K."/>
            <person name="Itoh M."/>
            <person name="Kato T."/>
            <person name="Kawaji H."/>
            <person name="Kawagashira N."/>
            <person name="Kawashima T."/>
            <person name="Kojima M."/>
            <person name="Kondo S."/>
            <person name="Konno H."/>
            <person name="Nakano K."/>
            <person name="Ninomiya N."/>
            <person name="Nishio T."/>
            <person name="Okada M."/>
            <person name="Plessy C."/>
            <person name="Shibata K."/>
            <person name="Shiraki T."/>
            <person name="Suzuki S."/>
            <person name="Tagami M."/>
            <person name="Waki K."/>
            <person name="Watahiki A."/>
            <person name="Okamura-Oho Y."/>
            <person name="Suzuki H."/>
            <person name="Kawai J."/>
            <person name="Hayashizaki Y."/>
        </authorList>
    </citation>
    <scope>NUCLEOTIDE SEQUENCE [LARGE SCALE MRNA] (ISOFORMS 1 AND 3)</scope>
    <source>
        <strain>C57BL/6J</strain>
        <strain>NOD</strain>
        <tissue>Corpora quadrigemina</tissue>
    </source>
</reference>
<reference key="3">
    <citation type="journal article" date="2004" name="Genome Res.">
        <title>The status, quality, and expansion of the NIH full-length cDNA project: the Mammalian Gene Collection (MGC).</title>
        <authorList>
            <consortium name="The MGC Project Team"/>
        </authorList>
    </citation>
    <scope>NUCLEOTIDE SEQUENCE [LARGE SCALE MRNA] (ISOFORM 2)</scope>
    <source>
        <strain>FVB/N</strain>
        <tissue>Mammary tumor</tissue>
    </source>
</reference>
<reference key="4">
    <citation type="journal article" date="2010" name="Cell">
        <title>A tissue-specific atlas of mouse protein phosphorylation and expression.</title>
        <authorList>
            <person name="Huttlin E.L."/>
            <person name="Jedrychowski M.P."/>
            <person name="Elias J.E."/>
            <person name="Goswami T."/>
            <person name="Rad R."/>
            <person name="Beausoleil S.A."/>
            <person name="Villen J."/>
            <person name="Haas W."/>
            <person name="Sowa M.E."/>
            <person name="Gygi S.P."/>
        </authorList>
    </citation>
    <scope>IDENTIFICATION BY MASS SPECTROMETRY [LARGE SCALE ANALYSIS]</scope>
    <source>
        <tissue>Brain</tissue>
        <tissue>Kidney</tissue>
    </source>
</reference>
<proteinExistence type="evidence at protein level"/>
<feature type="initiator methionine" description="Removed" evidence="2">
    <location>
        <position position="1"/>
    </location>
</feature>
<feature type="chain" id="PRO_0000315665" description="Protein rogdi homolog">
    <location>
        <begin position="2"/>
        <end position="287"/>
    </location>
</feature>
<feature type="modified residue" description="N-acetylalanine" evidence="2">
    <location>
        <position position="2"/>
    </location>
</feature>
<feature type="splice variant" id="VSP_030600" description="In isoform 2." evidence="4">
    <original>A</original>
    <variation>ALPPGWLRRLGPQPSPHCIAGSQ</variation>
    <location>
        <position position="85"/>
    </location>
</feature>
<feature type="splice variant" id="VSP_030601" description="In isoform 3." evidence="5">
    <original>QLHALQPTSTKNFRPAGGAVLHSPGAMFEWGSQRLEVSHVHKVECVIPWLNDALVYFTVSLQLCQQLKDKIAVFSSYWSSRPF</original>
    <variation>HLFCDPTHL</variation>
    <location>
        <begin position="205"/>
        <end position="287"/>
    </location>
</feature>
<feature type="sequence conflict" description="In Ref. 1; AAK71345." evidence="6" ref="1">
    <original>S</original>
    <variation>N</variation>
    <location>
        <position position="158"/>
    </location>
</feature>
<feature type="sequence conflict" description="In Ref. 1; AAK71345." evidence="6" ref="1">
    <original>A</original>
    <variation>T</variation>
    <location>
        <position position="164"/>
    </location>
</feature>
<feature type="sequence conflict" description="In Ref. 2; BAE41595." evidence="6" ref="2">
    <original>Y</original>
    <variation>H</variation>
    <location>
        <position position="193"/>
    </location>
</feature>
<comment type="subunit">
    <text evidence="2">Monomer.</text>
</comment>
<comment type="subcellular location">
    <subcellularLocation>
        <location evidence="2">Nucleus envelope</location>
    </subcellularLocation>
    <subcellularLocation>
        <location evidence="1">Presynapse</location>
    </subcellularLocation>
    <subcellularLocation>
        <location evidence="1">Cell projection</location>
        <location evidence="1">Axon</location>
    </subcellularLocation>
    <subcellularLocation>
        <location evidence="1">Perikaryon</location>
    </subcellularLocation>
    <subcellularLocation>
        <location evidence="1">Cell projection</location>
        <location evidence="1">Dendrite</location>
    </subcellularLocation>
    <subcellularLocation>
        <location evidence="1">Cytoplasmic vesicle</location>
        <location evidence="1">Secretory vesicle</location>
        <location evidence="1">Synaptic vesicle</location>
    </subcellularLocation>
    <text evidence="1">Detected primarily at presynaptic sites on axons, and to a lesser degree in soma and dendrites. Not detected at post-synaptic sites.</text>
</comment>
<comment type="alternative products">
    <event type="alternative splicing"/>
    <isoform>
        <id>Q3TDK6-1</id>
        <name>1</name>
        <sequence type="displayed"/>
    </isoform>
    <isoform>
        <id>Q3TDK6-2</id>
        <name>2</name>
        <sequence type="described" ref="VSP_030600"/>
    </isoform>
    <isoform>
        <id>Q3TDK6-3</id>
        <name>3</name>
        <sequence type="described" ref="VSP_030601"/>
    </isoform>
</comment>
<comment type="tissue specificity">
    <text evidence="3">Detected in brain, kidney and testis.</text>
</comment>
<comment type="similarity">
    <text evidence="6">Belongs to the rogdi family.</text>
</comment>
<comment type="sequence caution" evidence="6">
    <conflict type="frameshift">
        <sequence resource="EMBL-CDS" id="AAK71345"/>
    </conflict>
</comment>
<sequence length="287" mass="32100">MATAMAASAAERAVLEEEFRWLLHAEVHAVLRQLQDILKEASLRFTLPGPSTEGPAKQENFILGSCGTDQVKGTLTLQGDALSQADVNLKMPRNNQLLHLAFREDKQWKLQQIQDARNHVSQAIYLLANRDESYQFKTGAEVLKLMDAVMLQLTRARSRLTTPATLTLPEIAASGLTRMFAPTLPSDLLVNVYINLNKLCLTVYQLHALQPTSTKNFRPAGGAVLHSPGAMFEWGSQRLEVSHVHKVECVIPWLNDALVYFTVSLQLCQQLKDKIAVFSSYWSSRPF</sequence>
<keyword id="KW-0007">Acetylation</keyword>
<keyword id="KW-0025">Alternative splicing</keyword>
<keyword id="KW-0966">Cell projection</keyword>
<keyword id="KW-0968">Cytoplasmic vesicle</keyword>
<keyword id="KW-0539">Nucleus</keyword>
<keyword id="KW-1185">Reference proteome</keyword>
<keyword id="KW-0770">Synapse</keyword>
<accession>Q3TDK6</accession>
<accession>Q8BL37</accession>
<accession>Q922N4</accession>
<accession>Q923H8</accession>
<protein>
    <recommendedName>
        <fullName>Protein rogdi homolog</fullName>
    </recommendedName>
    <alternativeName>
        <fullName>Leucine-zipper-containing LZF</fullName>
    </alternativeName>
</protein>
<name>ROGDI_MOUSE</name>
<dbReference type="EMBL" id="AY036117">
    <property type="protein sequence ID" value="AAK71345.1"/>
    <property type="status" value="ALT_FRAME"/>
    <property type="molecule type" value="mRNA"/>
</dbReference>
<dbReference type="EMBL" id="AK046477">
    <property type="protein sequence ID" value="BAC32748.1"/>
    <property type="molecule type" value="mRNA"/>
</dbReference>
<dbReference type="EMBL" id="AK170144">
    <property type="protein sequence ID" value="BAE41595.1"/>
    <property type="molecule type" value="mRNA"/>
</dbReference>
<dbReference type="EMBL" id="BC006914">
    <property type="protein sequence ID" value="AAH06914.1"/>
    <property type="molecule type" value="mRNA"/>
</dbReference>
<dbReference type="CCDS" id="CCDS79419.1">
    <molecule id="Q3TDK6-1"/>
</dbReference>
<dbReference type="RefSeq" id="NP_573448.2">
    <molecule id="Q3TDK6-1"/>
    <property type="nucleotide sequence ID" value="NM_133185.2"/>
</dbReference>
<dbReference type="SMR" id="Q3TDK6"/>
<dbReference type="BioGRID" id="211177">
    <property type="interactions" value="3"/>
</dbReference>
<dbReference type="FunCoup" id="Q3TDK6">
    <property type="interactions" value="864"/>
</dbReference>
<dbReference type="IntAct" id="Q3TDK6">
    <property type="interactions" value="3"/>
</dbReference>
<dbReference type="MINT" id="Q3TDK6"/>
<dbReference type="STRING" id="10090.ENSMUSP00000144481"/>
<dbReference type="iPTMnet" id="Q3TDK6"/>
<dbReference type="PhosphoSitePlus" id="Q3TDK6"/>
<dbReference type="SwissPalm" id="Q3TDK6"/>
<dbReference type="PaxDb" id="10090-ENSMUSP00000023191"/>
<dbReference type="PeptideAtlas" id="Q3TDK6"/>
<dbReference type="ProteomicsDB" id="301640">
    <molecule id="Q3TDK6-1"/>
</dbReference>
<dbReference type="ProteomicsDB" id="301641">
    <molecule id="Q3TDK6-2"/>
</dbReference>
<dbReference type="ProteomicsDB" id="301642">
    <molecule id="Q3TDK6-3"/>
</dbReference>
<dbReference type="Pumba" id="Q3TDK6"/>
<dbReference type="Antibodypedia" id="42735">
    <property type="antibodies" value="70 antibodies from 19 providers"/>
</dbReference>
<dbReference type="DNASU" id="66049"/>
<dbReference type="Ensembl" id="ENSMUST00000023191.17">
    <molecule id="Q3TDK6-2"/>
    <property type="protein sequence ID" value="ENSMUSP00000023191.11"/>
    <property type="gene ID" value="ENSMUSG00000022540.18"/>
</dbReference>
<dbReference type="Ensembl" id="ENSMUST00000202281.4">
    <molecule id="Q3TDK6-1"/>
    <property type="protein sequence ID" value="ENSMUSP00000144481.2"/>
    <property type="gene ID" value="ENSMUSG00000022540.18"/>
</dbReference>
<dbReference type="GeneID" id="66049"/>
<dbReference type="KEGG" id="mmu:66049"/>
<dbReference type="UCSC" id="uc007ybj.1">
    <molecule id="Q3TDK6-1"/>
    <property type="organism name" value="mouse"/>
</dbReference>
<dbReference type="AGR" id="MGI:1913299"/>
<dbReference type="CTD" id="79641"/>
<dbReference type="MGI" id="MGI:1913299">
    <property type="gene designation" value="Rogdi"/>
</dbReference>
<dbReference type="VEuPathDB" id="HostDB:ENSMUSG00000022540"/>
<dbReference type="eggNOG" id="KOG3992">
    <property type="taxonomic scope" value="Eukaryota"/>
</dbReference>
<dbReference type="GeneTree" id="ENSGT00390000007164"/>
<dbReference type="HOGENOM" id="CLU_062094_1_0_1"/>
<dbReference type="InParanoid" id="Q3TDK6"/>
<dbReference type="OMA" id="NILMECA"/>
<dbReference type="OrthoDB" id="31769at9989"/>
<dbReference type="PhylomeDB" id="Q3TDK6"/>
<dbReference type="TreeFam" id="TF105859"/>
<dbReference type="BioGRID-ORCS" id="66049">
    <property type="hits" value="2 hits in 70 CRISPR screens"/>
</dbReference>
<dbReference type="CD-CODE" id="CE726F99">
    <property type="entry name" value="Postsynaptic density"/>
</dbReference>
<dbReference type="ChiTaRS" id="Rogdi">
    <property type="organism name" value="mouse"/>
</dbReference>
<dbReference type="PRO" id="PR:Q3TDK6"/>
<dbReference type="Proteomes" id="UP000000589">
    <property type="component" value="Chromosome 16"/>
</dbReference>
<dbReference type="RNAct" id="Q3TDK6">
    <property type="molecule type" value="protein"/>
</dbReference>
<dbReference type="Bgee" id="ENSMUSG00000022540">
    <property type="expression patterns" value="Expressed in retinal neural layer and 260 other cell types or tissues"/>
</dbReference>
<dbReference type="ExpressionAtlas" id="Q3TDK6">
    <property type="expression patterns" value="baseline and differential"/>
</dbReference>
<dbReference type="GO" id="GO:0030424">
    <property type="term" value="C:axon"/>
    <property type="evidence" value="ECO:0007669"/>
    <property type="project" value="UniProtKB-SubCell"/>
</dbReference>
<dbReference type="GO" id="GO:0030425">
    <property type="term" value="C:dendrite"/>
    <property type="evidence" value="ECO:0007669"/>
    <property type="project" value="UniProtKB-SubCell"/>
</dbReference>
<dbReference type="GO" id="GO:0098686">
    <property type="term" value="C:hippocampal mossy fiber to CA3 synapse"/>
    <property type="evidence" value="ECO:0007669"/>
    <property type="project" value="Ensembl"/>
</dbReference>
<dbReference type="GO" id="GO:0005635">
    <property type="term" value="C:nuclear envelope"/>
    <property type="evidence" value="ECO:0007669"/>
    <property type="project" value="UniProtKB-SubCell"/>
</dbReference>
<dbReference type="GO" id="GO:0043204">
    <property type="term" value="C:perikaryon"/>
    <property type="evidence" value="ECO:0007669"/>
    <property type="project" value="UniProtKB-SubCell"/>
</dbReference>
<dbReference type="GO" id="GO:0008021">
    <property type="term" value="C:synaptic vesicle"/>
    <property type="evidence" value="ECO:0007669"/>
    <property type="project" value="UniProtKB-SubCell"/>
</dbReference>
<dbReference type="GO" id="GO:0097186">
    <property type="term" value="P:amelogenesis"/>
    <property type="evidence" value="ECO:0000315"/>
    <property type="project" value="MGI"/>
</dbReference>
<dbReference type="GO" id="GO:0030282">
    <property type="term" value="P:bone mineralization"/>
    <property type="evidence" value="ECO:0000315"/>
    <property type="project" value="MGI"/>
</dbReference>
<dbReference type="GO" id="GO:0007420">
    <property type="term" value="P:brain development"/>
    <property type="evidence" value="ECO:0000315"/>
    <property type="project" value="MGI"/>
</dbReference>
<dbReference type="GO" id="GO:0048512">
    <property type="term" value="P:circadian behavior"/>
    <property type="evidence" value="ECO:0000315"/>
    <property type="project" value="MGI"/>
</dbReference>
<dbReference type="GO" id="GO:0070166">
    <property type="term" value="P:enamel mineralization"/>
    <property type="evidence" value="ECO:0000315"/>
    <property type="project" value="MGI"/>
</dbReference>
<dbReference type="GO" id="GO:0010467">
    <property type="term" value="P:gene expression"/>
    <property type="evidence" value="ECO:0000315"/>
    <property type="project" value="MGI"/>
</dbReference>
<dbReference type="GO" id="GO:0030097">
    <property type="term" value="P:hemopoiesis"/>
    <property type="evidence" value="ECO:0000314"/>
    <property type="project" value="MGI"/>
</dbReference>
<dbReference type="GO" id="GO:0040011">
    <property type="term" value="P:locomotion"/>
    <property type="evidence" value="ECO:0000315"/>
    <property type="project" value="MGI"/>
</dbReference>
<dbReference type="GO" id="GO:0045475">
    <property type="term" value="P:locomotor rhythm"/>
    <property type="evidence" value="ECO:0000315"/>
    <property type="project" value="MGI"/>
</dbReference>
<dbReference type="GO" id="GO:0007626">
    <property type="term" value="P:locomotory behavior"/>
    <property type="evidence" value="ECO:0000315"/>
    <property type="project" value="MGI"/>
</dbReference>
<dbReference type="GO" id="GO:0007613">
    <property type="term" value="P:memory"/>
    <property type="evidence" value="ECO:0000315"/>
    <property type="project" value="MGI"/>
</dbReference>
<dbReference type="GO" id="GO:0050877">
    <property type="term" value="P:nervous system process"/>
    <property type="evidence" value="ECO:0000315"/>
    <property type="project" value="MGI"/>
</dbReference>
<dbReference type="GO" id="GO:0022008">
    <property type="term" value="P:neurogenesis"/>
    <property type="evidence" value="ECO:0007669"/>
    <property type="project" value="Ensembl"/>
</dbReference>
<dbReference type="GO" id="GO:0050905">
    <property type="term" value="P:neuromuscular process"/>
    <property type="evidence" value="ECO:0000315"/>
    <property type="project" value="MGI"/>
</dbReference>
<dbReference type="GO" id="GO:0045851">
    <property type="term" value="P:pH reduction"/>
    <property type="evidence" value="ECO:0000315"/>
    <property type="project" value="MGI"/>
</dbReference>
<dbReference type="GO" id="GO:0008284">
    <property type="term" value="P:positive regulation of cell population proliferation"/>
    <property type="evidence" value="ECO:0000314"/>
    <property type="project" value="MGI"/>
</dbReference>
<dbReference type="GO" id="GO:0006885">
    <property type="term" value="P:regulation of pH"/>
    <property type="evidence" value="ECO:0000315"/>
    <property type="project" value="MGI"/>
</dbReference>
<dbReference type="GO" id="GO:0009410">
    <property type="term" value="P:response to xenobiotic stimulus"/>
    <property type="evidence" value="ECO:0000315"/>
    <property type="project" value="MGI"/>
</dbReference>
<dbReference type="InterPro" id="IPR028241">
    <property type="entry name" value="RAVE2/Rogdi"/>
</dbReference>
<dbReference type="PANTHER" id="PTHR13618">
    <property type="entry name" value="LEUCINE ZIPPER CONTAINING TRANSCRIPTION FACTOR LZF1"/>
    <property type="match status" value="1"/>
</dbReference>
<dbReference type="PANTHER" id="PTHR13618:SF1">
    <property type="entry name" value="PROTEIN ROGDI HOMOLOG"/>
    <property type="match status" value="1"/>
</dbReference>
<dbReference type="Pfam" id="PF10259">
    <property type="entry name" value="Rogdi_lz"/>
    <property type="match status" value="1"/>
</dbReference>
<organism>
    <name type="scientific">Mus musculus</name>
    <name type="common">Mouse</name>
    <dbReference type="NCBI Taxonomy" id="10090"/>
    <lineage>
        <taxon>Eukaryota</taxon>
        <taxon>Metazoa</taxon>
        <taxon>Chordata</taxon>
        <taxon>Craniata</taxon>
        <taxon>Vertebrata</taxon>
        <taxon>Euteleostomi</taxon>
        <taxon>Mammalia</taxon>
        <taxon>Eutheria</taxon>
        <taxon>Euarchontoglires</taxon>
        <taxon>Glires</taxon>
        <taxon>Rodentia</taxon>
        <taxon>Myomorpha</taxon>
        <taxon>Muroidea</taxon>
        <taxon>Muridae</taxon>
        <taxon>Murinae</taxon>
        <taxon>Mus</taxon>
        <taxon>Mus</taxon>
    </lineage>
</organism>